<feature type="chain" id="PRO_0000436181" description="Kinesin-like protein Klp98A">
    <location>
        <begin position="1"/>
        <end position="1265"/>
    </location>
</feature>
<feature type="domain" description="Kinesin motor" evidence="3">
    <location>
        <begin position="3"/>
        <end position="364"/>
    </location>
</feature>
<feature type="domain" description="PX" evidence="2">
    <location>
        <begin position="1129"/>
        <end position="1259"/>
    </location>
</feature>
<feature type="region of interest" description="Disordered" evidence="5">
    <location>
        <begin position="597"/>
        <end position="621"/>
    </location>
</feature>
<feature type="region of interest" description="Disordered" evidence="5">
    <location>
        <begin position="828"/>
        <end position="864"/>
    </location>
</feature>
<feature type="region of interest" description="Disordered" evidence="5">
    <location>
        <begin position="884"/>
        <end position="954"/>
    </location>
</feature>
<feature type="coiled-coil region" evidence="1">
    <location>
        <begin position="619"/>
        <end position="670"/>
    </location>
</feature>
<feature type="coiled-coil region" evidence="1">
    <location>
        <begin position="768"/>
        <end position="848"/>
    </location>
</feature>
<feature type="coiled-coil region" evidence="1">
    <location>
        <begin position="1035"/>
        <end position="1071"/>
    </location>
</feature>
<feature type="compositionally biased region" description="Polar residues" evidence="5">
    <location>
        <begin position="846"/>
        <end position="857"/>
    </location>
</feature>
<feature type="compositionally biased region" description="Polar residues" evidence="5">
    <location>
        <begin position="884"/>
        <end position="901"/>
    </location>
</feature>
<feature type="compositionally biased region" description="Polar residues" evidence="5">
    <location>
        <begin position="917"/>
        <end position="927"/>
    </location>
</feature>
<feature type="compositionally biased region" description="Gly residues" evidence="5">
    <location>
        <begin position="933"/>
        <end position="946"/>
    </location>
</feature>
<feature type="binding site" evidence="3">
    <location>
        <begin position="100"/>
        <end position="107"/>
    </location>
    <ligand>
        <name>ATP</name>
        <dbReference type="ChEBI" id="CHEBI:30616"/>
    </ligand>
</feature>
<feature type="splice variant" id="VSP_058298" description="In isoform B.">
    <location>
        <begin position="700"/>
        <end position="740"/>
    </location>
</feature>
<feature type="sequence conflict" description="In Ref. 4; AAA28659." evidence="8" ref="4">
    <original>E</original>
    <variation>P</variation>
    <location>
        <position position="90"/>
    </location>
</feature>
<feature type="sequence conflict" description="In Ref. 4; AAA28659." evidence="8" ref="4">
    <original>EH</original>
    <variation>DD</variation>
    <location>
        <begin position="172"/>
        <end position="173"/>
    </location>
</feature>
<sequence>MSSLKVAVRVRPFNSREIDMDAQLIMEMENKKTRLLKPRLQSIRDAGRDNHHDFTFDYSYWSFDAEDPHFATQEQVYSDLGNDVVDCAYEGYNACVFAYGQTGSGKTFTMMGTPNNPGLIPRICEELFARMRVGQESGTGYRTHASYLEIYNERVKDLLAAQSTGHGLRVREHRSLGPYVENLSQHAVSDFDEIQECIARGNAQRTTASTNMNDTSSRSHAIFTITFVQAVFMNDMPSETVSKIHLVDLAGSERANATGATGQRLKEGAHINKSLVTLGSVISALAEQTGGGHNSSSSALATTPNGASKRVLYIPYRDSILTWLLKDSLGGNSKTIMIAALSPADCNYSETLSTLRYANRAKNIINKPTVNEDTNVKLIRELREEINKLKSMLAGDIHSLQPSLKVLADLQKKEAQEKVLTEEWTEKWKVAQSILQEQKSLGLRKSGVGVVLDSEMPHLIGIHNDVTTGVTLYSLKEGETRIGSEDADVAQDIELAGDGIRAQHCSIFLKGGVVTLHPWPLAQCWVNAHLIDEPKQISQGDIILLGRTNIFRFNNPAEAAKLRKDLSRSQLDMSRLSLITSSKENLLTCSIYSDEDGASPYKRPERQYYPQRPMSRDDPELQDENRKILDTIENALKQLNVERVQMHDQYKTKVRKLTEELIRLEQEEMDGLQLLNCREQELIARKDMLLWEKNNEKVQIDIVCRQISAFQTQLDSKKRDFSEYVAKELQELQDCGKLDEMGMKIEEGTPLNDELLLQVSDSLDLFAAQFIKDTVRRNNEEIRKLDEQIAEKERILNASTTKIAKVDETMLEIQAQLERLRLERAESEAESQAMRAKKQNMKLQLGNKSMSTSTSTNEADDVSKSDTYETCDTFHTAQSNLSLVSSPTITEGQQSPLSNCSCDAEDEAEDTRKDDLSGSSEETSRTCTAGPSSGSGSGSVGIGGSGSAPSCTPSSQAIMSDSGVCLDSRNQAILQNGHLNNYKQAVRTSDEDTGSCSSCELGRHSDVARPYCPLHSLRRKIAAQKALIMKNLETDLNKAQLDEHIADLQDLQRRYIQMEQEMLQSVQDLEAHAQCCADERSGMERQYELASSIMRSSVMSPTSMEESTSQIYSPSMTRSCPSMREFPEGEHFITIPSFVMRGAGKQTHYEYEVRIALPDGKLNILRRYSRFRELHLCMKHCYGAKISALPFPRRELFASNSEPVAKHRRRLLELYLRRLFVVCSKIPQCPIYEGPGGTGLTRASLVQLSSFFKKGLFENGKHGTG</sequence>
<organism evidence="13">
    <name type="scientific">Drosophila melanogaster</name>
    <name type="common">Fruit fly</name>
    <dbReference type="NCBI Taxonomy" id="7227"/>
    <lineage>
        <taxon>Eukaryota</taxon>
        <taxon>Metazoa</taxon>
        <taxon>Ecdysozoa</taxon>
        <taxon>Arthropoda</taxon>
        <taxon>Hexapoda</taxon>
        <taxon>Insecta</taxon>
        <taxon>Pterygota</taxon>
        <taxon>Neoptera</taxon>
        <taxon>Endopterygota</taxon>
        <taxon>Diptera</taxon>
        <taxon>Brachycera</taxon>
        <taxon>Muscomorpha</taxon>
        <taxon>Ephydroidea</taxon>
        <taxon>Drosophilidae</taxon>
        <taxon>Drosophila</taxon>
        <taxon>Sophophora</taxon>
    </lineage>
</organism>
<evidence type="ECO:0000255" key="1"/>
<evidence type="ECO:0000255" key="2">
    <source>
        <dbReference type="PROSITE-ProRule" id="PRU00147"/>
    </source>
</evidence>
<evidence type="ECO:0000255" key="3">
    <source>
        <dbReference type="PROSITE-ProRule" id="PRU00283"/>
    </source>
</evidence>
<evidence type="ECO:0000255" key="4">
    <source>
        <dbReference type="RuleBase" id="RU000394"/>
    </source>
</evidence>
<evidence type="ECO:0000256" key="5">
    <source>
        <dbReference type="SAM" id="MobiDB-lite"/>
    </source>
</evidence>
<evidence type="ECO:0000269" key="6">
    <source>
    </source>
</evidence>
<evidence type="ECO:0000269" key="7">
    <source>
    </source>
</evidence>
<evidence type="ECO:0000305" key="8"/>
<evidence type="ECO:0000312" key="9">
    <source>
        <dbReference type="EMBL" id="AAA28659.1"/>
    </source>
</evidence>
<evidence type="ECO:0000312" key="10">
    <source>
        <dbReference type="EMBL" id="AAL48506.1"/>
    </source>
</evidence>
<evidence type="ECO:0000312" key="11">
    <source>
        <dbReference type="EMBL" id="AEW43887.1"/>
    </source>
</evidence>
<evidence type="ECO:0000312" key="12">
    <source>
        <dbReference type="FlyBase" id="FBgn0004387"/>
    </source>
</evidence>
<evidence type="ECO:0000312" key="13">
    <source>
        <dbReference type="Proteomes" id="UP000000803"/>
    </source>
</evidence>
<dbReference type="EMBL" id="AE014297">
    <property type="protein sequence ID" value="AAF56718.2"/>
    <property type="molecule type" value="Genomic_DNA"/>
</dbReference>
<dbReference type="EMBL" id="AE014297">
    <property type="protein sequence ID" value="AFH06656.1"/>
    <property type="molecule type" value="Genomic_DNA"/>
</dbReference>
<dbReference type="EMBL" id="AY070884">
    <property type="protein sequence ID" value="AAL48506.1"/>
    <property type="status" value="ALT_FRAME"/>
    <property type="molecule type" value="mRNA"/>
</dbReference>
<dbReference type="EMBL" id="BT132947">
    <property type="protein sequence ID" value="AEW43887.1"/>
    <property type="molecule type" value="mRNA"/>
</dbReference>
<dbReference type="EMBL" id="M74432">
    <property type="protein sequence ID" value="AAA28659.1"/>
    <property type="molecule type" value="Genomic_DNA"/>
</dbReference>
<dbReference type="PIR" id="F41298">
    <property type="entry name" value="F41298"/>
</dbReference>
<dbReference type="RefSeq" id="NP_001247339.1">
    <molecule id="Q9VB25-2"/>
    <property type="nucleotide sequence ID" value="NM_001260410.2"/>
</dbReference>
<dbReference type="RefSeq" id="NP_524532.2">
    <molecule id="Q9VB25-1"/>
    <property type="nucleotide sequence ID" value="NM_079808.4"/>
</dbReference>
<dbReference type="SMR" id="Q9VB25"/>
<dbReference type="FunCoup" id="Q9VB25">
    <property type="interactions" value="794"/>
</dbReference>
<dbReference type="IntAct" id="Q9VB25">
    <property type="interactions" value="5"/>
</dbReference>
<dbReference type="STRING" id="7227.FBpp0084581"/>
<dbReference type="GlyGen" id="Q9VB25">
    <property type="glycosylation" value="1 site"/>
</dbReference>
<dbReference type="PaxDb" id="7227-FBpp0084581"/>
<dbReference type="DNASU" id="43310"/>
<dbReference type="EnsemblMetazoa" id="FBtr0085211">
    <molecule id="Q9VB25-1"/>
    <property type="protein sequence ID" value="FBpp0084581"/>
    <property type="gene ID" value="FBgn0004387"/>
</dbReference>
<dbReference type="EnsemblMetazoa" id="FBtr0304671">
    <molecule id="Q9VB25-2"/>
    <property type="protein sequence ID" value="FBpp0293213"/>
    <property type="gene ID" value="FBgn0004387"/>
</dbReference>
<dbReference type="GeneID" id="43310"/>
<dbReference type="KEGG" id="dme:Dmel_CG5658"/>
<dbReference type="UCSC" id="CG5658-RA">
    <molecule id="Q9VB25-1"/>
    <property type="organism name" value="d. melanogaster"/>
</dbReference>
<dbReference type="AGR" id="FB:FBgn0004387"/>
<dbReference type="CTD" id="43310"/>
<dbReference type="FlyBase" id="FBgn0004387">
    <property type="gene designation" value="Klp98A"/>
</dbReference>
<dbReference type="VEuPathDB" id="VectorBase:FBgn0004387"/>
<dbReference type="eggNOG" id="KOG0245">
    <property type="taxonomic scope" value="Eukaryota"/>
</dbReference>
<dbReference type="GeneTree" id="ENSGT00940000162977"/>
<dbReference type="InParanoid" id="Q9VB25"/>
<dbReference type="OMA" id="QVLNCRE"/>
<dbReference type="OrthoDB" id="3176171at2759"/>
<dbReference type="PhylomeDB" id="Q9VB25"/>
<dbReference type="Reactome" id="R-DME-6811434">
    <property type="pathway name" value="COPI-dependent Golgi-to-ER retrograde traffic"/>
</dbReference>
<dbReference type="Reactome" id="R-DME-983189">
    <property type="pathway name" value="Kinesins"/>
</dbReference>
<dbReference type="SignaLink" id="Q9VB25"/>
<dbReference type="BioGRID-ORCS" id="43310">
    <property type="hits" value="0 hits in 1 CRISPR screen"/>
</dbReference>
<dbReference type="GenomeRNAi" id="43310"/>
<dbReference type="PRO" id="PR:Q9VB25"/>
<dbReference type="Proteomes" id="UP000000803">
    <property type="component" value="Chromosome 3R"/>
</dbReference>
<dbReference type="Bgee" id="FBgn0004387">
    <property type="expression patterns" value="Expressed in adult abdominal pericardial cell (Drosophila) in dorsal vessel heart and 270 other cell types or tissues"/>
</dbReference>
<dbReference type="ExpressionAtlas" id="Q9VB25">
    <property type="expression patterns" value="baseline and differential"/>
</dbReference>
<dbReference type="GO" id="GO:0005737">
    <property type="term" value="C:cytoplasm"/>
    <property type="evidence" value="ECO:0000318"/>
    <property type="project" value="GO_Central"/>
</dbReference>
<dbReference type="GO" id="GO:0005769">
    <property type="term" value="C:early endosome"/>
    <property type="evidence" value="ECO:0007669"/>
    <property type="project" value="UniProtKB-SubCell"/>
</dbReference>
<dbReference type="GO" id="GO:0005871">
    <property type="term" value="C:kinesin complex"/>
    <property type="evidence" value="ECO:0000318"/>
    <property type="project" value="GO_Central"/>
</dbReference>
<dbReference type="GO" id="GO:0005874">
    <property type="term" value="C:microtubule"/>
    <property type="evidence" value="ECO:0000318"/>
    <property type="project" value="GO_Central"/>
</dbReference>
<dbReference type="GO" id="GO:0005524">
    <property type="term" value="F:ATP binding"/>
    <property type="evidence" value="ECO:0007669"/>
    <property type="project" value="UniProtKB-KW"/>
</dbReference>
<dbReference type="GO" id="GO:0016887">
    <property type="term" value="F:ATP hydrolysis activity"/>
    <property type="evidence" value="ECO:0000318"/>
    <property type="project" value="GO_Central"/>
</dbReference>
<dbReference type="GO" id="GO:0008017">
    <property type="term" value="F:microtubule binding"/>
    <property type="evidence" value="ECO:0000318"/>
    <property type="project" value="GO_Central"/>
</dbReference>
<dbReference type="GO" id="GO:1901981">
    <property type="term" value="F:phosphatidylinositol phosphate binding"/>
    <property type="evidence" value="ECO:0000250"/>
    <property type="project" value="FlyBase"/>
</dbReference>
<dbReference type="GO" id="GO:0032266">
    <property type="term" value="F:phosphatidylinositol-3-phosphate binding"/>
    <property type="evidence" value="ECO:0000314"/>
    <property type="project" value="FlyBase"/>
</dbReference>
<dbReference type="GO" id="GO:0008574">
    <property type="term" value="F:plus-end-directed microtubule motor activity"/>
    <property type="evidence" value="ECO:0000314"/>
    <property type="project" value="FlyBase"/>
</dbReference>
<dbReference type="GO" id="GO:0045167">
    <property type="term" value="P:asymmetric protein localization involved in cell fate determination"/>
    <property type="evidence" value="ECO:0000315"/>
    <property type="project" value="FlyBase"/>
</dbReference>
<dbReference type="GO" id="GO:0006914">
    <property type="term" value="P:autophagy"/>
    <property type="evidence" value="ECO:0007669"/>
    <property type="project" value="UniProtKB-KW"/>
</dbReference>
<dbReference type="GO" id="GO:0045022">
    <property type="term" value="P:early endosome to late endosome transport"/>
    <property type="evidence" value="ECO:0000250"/>
    <property type="project" value="FlyBase"/>
</dbReference>
<dbReference type="GO" id="GO:0140024">
    <property type="term" value="P:plus-end-directed endosome transport along mitotic spindle midzone microtubule"/>
    <property type="evidence" value="ECO:0000314"/>
    <property type="project" value="FlyBase"/>
</dbReference>
<dbReference type="GO" id="GO:0045056">
    <property type="term" value="P:transcytosis"/>
    <property type="evidence" value="ECO:0000315"/>
    <property type="project" value="FlyBase"/>
</dbReference>
<dbReference type="GO" id="GO:0047496">
    <property type="term" value="P:vesicle transport along microtubule"/>
    <property type="evidence" value="ECO:0000318"/>
    <property type="project" value="GO_Central"/>
</dbReference>
<dbReference type="CDD" id="cd22708">
    <property type="entry name" value="FHA_KIF16"/>
    <property type="match status" value="1"/>
</dbReference>
<dbReference type="CDD" id="cd01365">
    <property type="entry name" value="KISc_KIF1A_KIF1B"/>
    <property type="match status" value="1"/>
</dbReference>
<dbReference type="CDD" id="cd06874">
    <property type="entry name" value="PX_KIF16B_SNX23"/>
    <property type="match status" value="1"/>
</dbReference>
<dbReference type="FunFam" id="3.30.1520.10:FF:000044">
    <property type="entry name" value="Kinesin-like protein KIF16B"/>
    <property type="match status" value="1"/>
</dbReference>
<dbReference type="FunFam" id="3.40.850.10:FF:000021">
    <property type="entry name" value="kinesin-like protein KIF16B isoform X1"/>
    <property type="match status" value="1"/>
</dbReference>
<dbReference type="FunFam" id="2.60.200.20:FF:000042">
    <property type="entry name" value="Kinesin-like protein Klp98A"/>
    <property type="match status" value="1"/>
</dbReference>
<dbReference type="Gene3D" id="2.60.200.20">
    <property type="match status" value="1"/>
</dbReference>
<dbReference type="Gene3D" id="3.40.850.10">
    <property type="entry name" value="Kinesin motor domain"/>
    <property type="match status" value="1"/>
</dbReference>
<dbReference type="Gene3D" id="3.30.1520.10">
    <property type="entry name" value="Phox-like domain"/>
    <property type="match status" value="1"/>
</dbReference>
<dbReference type="InterPro" id="IPR000253">
    <property type="entry name" value="FHA_dom"/>
</dbReference>
<dbReference type="InterPro" id="IPR019821">
    <property type="entry name" value="Kinesin_motor_CS"/>
</dbReference>
<dbReference type="InterPro" id="IPR001752">
    <property type="entry name" value="Kinesin_motor_dom"/>
</dbReference>
<dbReference type="InterPro" id="IPR036961">
    <property type="entry name" value="Kinesin_motor_dom_sf"/>
</dbReference>
<dbReference type="InterPro" id="IPR027417">
    <property type="entry name" value="P-loop_NTPase"/>
</dbReference>
<dbReference type="InterPro" id="IPR001683">
    <property type="entry name" value="PX_dom"/>
</dbReference>
<dbReference type="InterPro" id="IPR036871">
    <property type="entry name" value="PX_dom_sf"/>
</dbReference>
<dbReference type="InterPro" id="IPR008984">
    <property type="entry name" value="SMAD_FHA_dom_sf"/>
</dbReference>
<dbReference type="PANTHER" id="PTHR47117:SF6">
    <property type="entry name" value="KINESIN-LIKE PROTEIN KIF16B"/>
    <property type="match status" value="1"/>
</dbReference>
<dbReference type="PANTHER" id="PTHR47117">
    <property type="entry name" value="STAR-RELATED LIPID TRANSFER PROTEIN 9"/>
    <property type="match status" value="1"/>
</dbReference>
<dbReference type="Pfam" id="PF00498">
    <property type="entry name" value="FHA"/>
    <property type="match status" value="1"/>
</dbReference>
<dbReference type="Pfam" id="PF00225">
    <property type="entry name" value="Kinesin"/>
    <property type="match status" value="1"/>
</dbReference>
<dbReference type="Pfam" id="PF00787">
    <property type="entry name" value="PX"/>
    <property type="match status" value="1"/>
</dbReference>
<dbReference type="PRINTS" id="PR00380">
    <property type="entry name" value="KINESINHEAVY"/>
</dbReference>
<dbReference type="SMART" id="SM00129">
    <property type="entry name" value="KISc"/>
    <property type="match status" value="1"/>
</dbReference>
<dbReference type="SUPFAM" id="SSF52540">
    <property type="entry name" value="P-loop containing nucleoside triphosphate hydrolases"/>
    <property type="match status" value="1"/>
</dbReference>
<dbReference type="SUPFAM" id="SSF64268">
    <property type="entry name" value="PX domain"/>
    <property type="match status" value="1"/>
</dbReference>
<dbReference type="SUPFAM" id="SSF49879">
    <property type="entry name" value="SMAD/FHA domain"/>
    <property type="match status" value="1"/>
</dbReference>
<dbReference type="PROSITE" id="PS00411">
    <property type="entry name" value="KINESIN_MOTOR_1"/>
    <property type="match status" value="1"/>
</dbReference>
<dbReference type="PROSITE" id="PS50067">
    <property type="entry name" value="KINESIN_MOTOR_2"/>
    <property type="match status" value="1"/>
</dbReference>
<dbReference type="PROSITE" id="PS50195">
    <property type="entry name" value="PX"/>
    <property type="match status" value="1"/>
</dbReference>
<accession>Q9VB25</accession>
<accession>A0A0B4K7N6</accession>
<accession>Q00088</accession>
<accession>Q8SZH6</accession>
<reference evidence="13" key="1">
    <citation type="journal article" date="2000" name="Science">
        <title>The genome sequence of Drosophila melanogaster.</title>
        <authorList>
            <person name="Adams M.D."/>
            <person name="Celniker S.E."/>
            <person name="Holt R.A."/>
            <person name="Evans C.A."/>
            <person name="Gocayne J.D."/>
            <person name="Amanatides P.G."/>
            <person name="Scherer S.E."/>
            <person name="Li P.W."/>
            <person name="Hoskins R.A."/>
            <person name="Galle R.F."/>
            <person name="George R.A."/>
            <person name="Lewis S.E."/>
            <person name="Richards S."/>
            <person name="Ashburner M."/>
            <person name="Henderson S.N."/>
            <person name="Sutton G.G."/>
            <person name="Wortman J.R."/>
            <person name="Yandell M.D."/>
            <person name="Zhang Q."/>
            <person name="Chen L.X."/>
            <person name="Brandon R.C."/>
            <person name="Rogers Y.-H.C."/>
            <person name="Blazej R.G."/>
            <person name="Champe M."/>
            <person name="Pfeiffer B.D."/>
            <person name="Wan K.H."/>
            <person name="Doyle C."/>
            <person name="Baxter E.G."/>
            <person name="Helt G."/>
            <person name="Nelson C.R."/>
            <person name="Miklos G.L.G."/>
            <person name="Abril J.F."/>
            <person name="Agbayani A."/>
            <person name="An H.-J."/>
            <person name="Andrews-Pfannkoch C."/>
            <person name="Baldwin D."/>
            <person name="Ballew R.M."/>
            <person name="Basu A."/>
            <person name="Baxendale J."/>
            <person name="Bayraktaroglu L."/>
            <person name="Beasley E.M."/>
            <person name="Beeson K.Y."/>
            <person name="Benos P.V."/>
            <person name="Berman B.P."/>
            <person name="Bhandari D."/>
            <person name="Bolshakov S."/>
            <person name="Borkova D."/>
            <person name="Botchan M.R."/>
            <person name="Bouck J."/>
            <person name="Brokstein P."/>
            <person name="Brottier P."/>
            <person name="Burtis K.C."/>
            <person name="Busam D.A."/>
            <person name="Butler H."/>
            <person name="Cadieu E."/>
            <person name="Center A."/>
            <person name="Chandra I."/>
            <person name="Cherry J.M."/>
            <person name="Cawley S."/>
            <person name="Dahlke C."/>
            <person name="Davenport L.B."/>
            <person name="Davies P."/>
            <person name="de Pablos B."/>
            <person name="Delcher A."/>
            <person name="Deng Z."/>
            <person name="Mays A.D."/>
            <person name="Dew I."/>
            <person name="Dietz S.M."/>
            <person name="Dodson K."/>
            <person name="Doup L.E."/>
            <person name="Downes M."/>
            <person name="Dugan-Rocha S."/>
            <person name="Dunkov B.C."/>
            <person name="Dunn P."/>
            <person name="Durbin K.J."/>
            <person name="Evangelista C.C."/>
            <person name="Ferraz C."/>
            <person name="Ferriera S."/>
            <person name="Fleischmann W."/>
            <person name="Fosler C."/>
            <person name="Gabrielian A.E."/>
            <person name="Garg N.S."/>
            <person name="Gelbart W.M."/>
            <person name="Glasser K."/>
            <person name="Glodek A."/>
            <person name="Gong F."/>
            <person name="Gorrell J.H."/>
            <person name="Gu Z."/>
            <person name="Guan P."/>
            <person name="Harris M."/>
            <person name="Harris N.L."/>
            <person name="Harvey D.A."/>
            <person name="Heiman T.J."/>
            <person name="Hernandez J.R."/>
            <person name="Houck J."/>
            <person name="Hostin D."/>
            <person name="Houston K.A."/>
            <person name="Howland T.J."/>
            <person name="Wei M.-H."/>
            <person name="Ibegwam C."/>
            <person name="Jalali M."/>
            <person name="Kalush F."/>
            <person name="Karpen G.H."/>
            <person name="Ke Z."/>
            <person name="Kennison J.A."/>
            <person name="Ketchum K.A."/>
            <person name="Kimmel B.E."/>
            <person name="Kodira C.D."/>
            <person name="Kraft C.L."/>
            <person name="Kravitz S."/>
            <person name="Kulp D."/>
            <person name="Lai Z."/>
            <person name="Lasko P."/>
            <person name="Lei Y."/>
            <person name="Levitsky A.A."/>
            <person name="Li J.H."/>
            <person name="Li Z."/>
            <person name="Liang Y."/>
            <person name="Lin X."/>
            <person name="Liu X."/>
            <person name="Mattei B."/>
            <person name="McIntosh T.C."/>
            <person name="McLeod M.P."/>
            <person name="McPherson D."/>
            <person name="Merkulov G."/>
            <person name="Milshina N.V."/>
            <person name="Mobarry C."/>
            <person name="Morris J."/>
            <person name="Moshrefi A."/>
            <person name="Mount S.M."/>
            <person name="Moy M."/>
            <person name="Murphy B."/>
            <person name="Murphy L."/>
            <person name="Muzny D.M."/>
            <person name="Nelson D.L."/>
            <person name="Nelson D.R."/>
            <person name="Nelson K.A."/>
            <person name="Nixon K."/>
            <person name="Nusskern D.R."/>
            <person name="Pacleb J.M."/>
            <person name="Palazzolo M."/>
            <person name="Pittman G.S."/>
            <person name="Pan S."/>
            <person name="Pollard J."/>
            <person name="Puri V."/>
            <person name="Reese M.G."/>
            <person name="Reinert K."/>
            <person name="Remington K."/>
            <person name="Saunders R.D.C."/>
            <person name="Scheeler F."/>
            <person name="Shen H."/>
            <person name="Shue B.C."/>
            <person name="Siden-Kiamos I."/>
            <person name="Simpson M."/>
            <person name="Skupski M.P."/>
            <person name="Smith T.J."/>
            <person name="Spier E."/>
            <person name="Spradling A.C."/>
            <person name="Stapleton M."/>
            <person name="Strong R."/>
            <person name="Sun E."/>
            <person name="Svirskas R."/>
            <person name="Tector C."/>
            <person name="Turner R."/>
            <person name="Venter E."/>
            <person name="Wang A.H."/>
            <person name="Wang X."/>
            <person name="Wang Z.-Y."/>
            <person name="Wassarman D.A."/>
            <person name="Weinstock G.M."/>
            <person name="Weissenbach J."/>
            <person name="Williams S.M."/>
            <person name="Woodage T."/>
            <person name="Worley K.C."/>
            <person name="Wu D."/>
            <person name="Yang S."/>
            <person name="Yao Q.A."/>
            <person name="Ye J."/>
            <person name="Yeh R.-F."/>
            <person name="Zaveri J.S."/>
            <person name="Zhan M."/>
            <person name="Zhang G."/>
            <person name="Zhao Q."/>
            <person name="Zheng L."/>
            <person name="Zheng X.H."/>
            <person name="Zhong F.N."/>
            <person name="Zhong W."/>
            <person name="Zhou X."/>
            <person name="Zhu S.C."/>
            <person name="Zhu X."/>
            <person name="Smith H.O."/>
            <person name="Gibbs R.A."/>
            <person name="Myers E.W."/>
            <person name="Rubin G.M."/>
            <person name="Venter J.C."/>
        </authorList>
    </citation>
    <scope>NUCLEOTIDE SEQUENCE [LARGE SCALE GENOMIC DNA]</scope>
    <source>
        <strain evidence="13">Berkeley</strain>
    </source>
</reference>
<reference evidence="13" key="2">
    <citation type="journal article" date="2002" name="Genome Biol.">
        <title>Annotation of the Drosophila melanogaster euchromatic genome: a systematic review.</title>
        <authorList>
            <person name="Misra S."/>
            <person name="Crosby M.A."/>
            <person name="Mungall C.J."/>
            <person name="Matthews B.B."/>
            <person name="Campbell K.S."/>
            <person name="Hradecky P."/>
            <person name="Huang Y."/>
            <person name="Kaminker J.S."/>
            <person name="Millburn G.H."/>
            <person name="Prochnik S.E."/>
            <person name="Smith C.D."/>
            <person name="Tupy J.L."/>
            <person name="Whitfield E.J."/>
            <person name="Bayraktaroglu L."/>
            <person name="Berman B.P."/>
            <person name="Bettencourt B.R."/>
            <person name="Celniker S.E."/>
            <person name="de Grey A.D.N.J."/>
            <person name="Drysdale R.A."/>
            <person name="Harris N.L."/>
            <person name="Richter J."/>
            <person name="Russo S."/>
            <person name="Schroeder A.J."/>
            <person name="Shu S.Q."/>
            <person name="Stapleton M."/>
            <person name="Yamada C."/>
            <person name="Ashburner M."/>
            <person name="Gelbart W.M."/>
            <person name="Rubin G.M."/>
            <person name="Lewis S.E."/>
        </authorList>
    </citation>
    <scope>GENOME REANNOTATION</scope>
    <source>
        <strain evidence="13">Berkeley</strain>
    </source>
</reference>
<reference evidence="10" key="3">
    <citation type="journal article" date="2002" name="Genome Biol.">
        <title>A Drosophila full-length cDNA resource.</title>
        <authorList>
            <person name="Stapleton M."/>
            <person name="Carlson J.W."/>
            <person name="Brokstein P."/>
            <person name="Yu C."/>
            <person name="Champe M."/>
            <person name="George R.A."/>
            <person name="Guarin H."/>
            <person name="Kronmiller B."/>
            <person name="Pacleb J.M."/>
            <person name="Park S."/>
            <person name="Wan K.H."/>
            <person name="Rubin G.M."/>
            <person name="Celniker S.E."/>
        </authorList>
    </citation>
    <scope>NUCLEOTIDE SEQUENCE [LARGE SCALE MRNA] (ISOFORM A)</scope>
    <source>
        <strain evidence="10">Berkeley</strain>
        <tissue evidence="10">Embryo</tissue>
    </source>
</reference>
<reference evidence="11" key="4">
    <citation type="submission" date="2011-12" db="EMBL/GenBank/DDBJ databases">
        <authorList>
            <person name="Carlson J."/>
            <person name="Booth B."/>
            <person name="Frise E."/>
            <person name="Park S."/>
            <person name="Wan K."/>
            <person name="Yu C."/>
            <person name="Celniker S."/>
        </authorList>
    </citation>
    <scope>NUCLEOTIDE SEQUENCE [LARGE SCALE MRNA] (ISOFORM A)</scope>
    <source>
        <strain evidence="11">Berkeley</strain>
    </source>
</reference>
<reference evidence="9" key="5">
    <citation type="journal article" date="1991" name="Proc. Natl. Acad. Sci. U.S.A.">
        <title>Identification and partial characterization of six members of the kinesin superfamily in Drosophila.</title>
        <authorList>
            <person name="Stewart R.J."/>
            <person name="Pesavento P.A."/>
            <person name="Woerpel D.N."/>
            <person name="Goldstein L.S.B."/>
        </authorList>
    </citation>
    <scope>NUCLEOTIDE SEQUENCE [GENOMIC DNA] OF 90-184</scope>
    <source>
        <strain evidence="9">DP CN BW</strain>
    </source>
</reference>
<reference evidence="8" key="6">
    <citation type="journal article" date="2015" name="Nature">
        <title>Polarized endosome dynamics by spindle asymmetry during asymmetric cell division.</title>
        <authorList>
            <person name="Derivery E."/>
            <person name="Seum C."/>
            <person name="Daeden A."/>
            <person name="Loubery S."/>
            <person name="Holtzer L."/>
            <person name="Juelicher F."/>
            <person name="Gonzalez-Gaitan M."/>
        </authorList>
    </citation>
    <scope>FUNCTION</scope>
    <scope>SUBCELLULAR LOCATION</scope>
    <scope>DISRUPTION PHENOTYPE</scope>
</reference>
<reference evidence="8" key="7">
    <citation type="journal article" date="2016" name="J. Cell Sci.">
        <title>Coordination of autophagosome-lysosome fusion and transport by a Klp98A-Rab14 complex.</title>
        <authorList>
            <person name="Mauvezin C."/>
            <person name="Neisch A.L."/>
            <person name="Ayala C.I."/>
            <person name="Kim J."/>
            <person name="Beltrame A."/>
            <person name="Braden C.R."/>
            <person name="Gardner M.K."/>
            <person name="Hays T.S."/>
            <person name="Neufeld T.P."/>
        </authorList>
    </citation>
    <scope>FUNCTION</scope>
    <scope>INTERACTION WITH ATG8A AND RAB14</scope>
</reference>
<keyword id="KW-0025">Alternative splicing</keyword>
<keyword id="KW-0067">ATP-binding</keyword>
<keyword id="KW-0072">Autophagy</keyword>
<keyword id="KW-0175">Coiled coil</keyword>
<keyword id="KW-0967">Endosome</keyword>
<keyword id="KW-0493">Microtubule</keyword>
<keyword id="KW-0505">Motor protein</keyword>
<keyword id="KW-0547">Nucleotide-binding</keyword>
<keyword id="KW-1185">Reference proteome</keyword>
<keyword id="KW-0813">Transport</keyword>
<proteinExistence type="evidence at protein level"/>
<name>KL98A_DROME</name>
<protein>
    <recommendedName>
        <fullName evidence="8">Kinesin-like protein Klp98A</fullName>
    </recommendedName>
</protein>
<gene>
    <name evidence="12" type="primary">Klp98A</name>
    <name evidence="12" type="ORF">CG5658</name>
</gene>
<comment type="function">
    <text evidence="6 7">Plus end-directed motor protein involved in asymmetric cell division of sensory organ precursor (SOP) cells by playing a role in the asymmetric localization of Sara-expressing endosomes to the pIIa daughter cell but not to the pIIb cell. Targets Sara-expressing endosomes to the central spindle which is symmetrically arranged in early cell division. During late cytokinesis, central spindle asymmetry is generated by enrichment of Patronin on the pIIb side which protects microtubules from depolymerization by Klp10A while unprotected microtubules on the pIIa side are disassembled by Klp10A, leading to the asymmetric delivery of Sara-expressing endosomes to the pIIa daughter cell (PubMed:26659188). Also plays a role in regulation of autophagosome formation, fusion and positioning and is required for normal localization of Rab14 (PubMed:26763909).</text>
</comment>
<comment type="subunit">
    <text evidence="7">Interacts with Atg8a and Rab14.</text>
</comment>
<comment type="subcellular location">
    <subcellularLocation>
        <location evidence="6">Early endosome</location>
    </subcellularLocation>
</comment>
<comment type="alternative products">
    <event type="alternative splicing"/>
    <isoform>
        <id>Q9VB25-1</id>
        <name evidence="12">A</name>
        <sequence type="displayed"/>
    </isoform>
    <isoform>
        <id>Q9VB25-2</id>
        <name evidence="12">B</name>
        <sequence type="described" ref="VSP_058298"/>
    </isoform>
</comment>
<comment type="disruption phenotype">
    <text evidence="6">Diffuse movement of Sara-expressing endosomes, failed targeting of Sara-expressing endosomes to the central spindle and symmetric endosome localization in daughter SOP cells.</text>
</comment>
<comment type="similarity">
    <text evidence="4">Belongs to the TRAFAC class myosin-kinesin ATPase superfamily. Kinesin family.</text>
</comment>
<comment type="sequence caution" evidence="8">
    <conflict type="frameshift">
        <sequence resource="EMBL-CDS" id="AAL48506"/>
    </conflict>
</comment>